<reference key="1">
    <citation type="journal article" date="2002" name="Genomics">
        <title>Mycobacterium bovis BCG cell wall and lipopolysaccharide induce a novel gene, BIGM103, encoding a 7-TM protein: identification of a new protein family having Zn-transporter and Zn-metalloprotease signatures.</title>
        <authorList>
            <person name="Begum N.A."/>
            <person name="Kobayashi M."/>
            <person name="Moriwaki Y."/>
            <person name="Matsumoto M."/>
            <person name="Toyoshima K."/>
            <person name="Seya T."/>
        </authorList>
    </citation>
    <scope>NUCLEOTIDE SEQUENCE [MRNA] (ISOFORM 1)</scope>
    <scope>FUNCTION</scope>
    <scope>TRANSPORTER ACTIVITY</scope>
    <scope>SUBCELLULAR LOCATION</scope>
    <scope>INDUCTION</scope>
    <scope>TISSUE SPECIFICITY</scope>
    <scope>MOTIF</scope>
</reference>
<reference key="2">
    <citation type="journal article" date="2004" name="Nat. Genet.">
        <title>Complete sequencing and characterization of 21,243 full-length human cDNAs.</title>
        <authorList>
            <person name="Ota T."/>
            <person name="Suzuki Y."/>
            <person name="Nishikawa T."/>
            <person name="Otsuki T."/>
            <person name="Sugiyama T."/>
            <person name="Irie R."/>
            <person name="Wakamatsu A."/>
            <person name="Hayashi K."/>
            <person name="Sato H."/>
            <person name="Nagai K."/>
            <person name="Kimura K."/>
            <person name="Makita H."/>
            <person name="Sekine M."/>
            <person name="Obayashi M."/>
            <person name="Nishi T."/>
            <person name="Shibahara T."/>
            <person name="Tanaka T."/>
            <person name="Ishii S."/>
            <person name="Yamamoto J."/>
            <person name="Saito K."/>
            <person name="Kawai Y."/>
            <person name="Isono Y."/>
            <person name="Nakamura Y."/>
            <person name="Nagahari K."/>
            <person name="Murakami K."/>
            <person name="Yasuda T."/>
            <person name="Iwayanagi T."/>
            <person name="Wagatsuma M."/>
            <person name="Shiratori A."/>
            <person name="Sudo H."/>
            <person name="Hosoiri T."/>
            <person name="Kaku Y."/>
            <person name="Kodaira H."/>
            <person name="Kondo H."/>
            <person name="Sugawara M."/>
            <person name="Takahashi M."/>
            <person name="Kanda K."/>
            <person name="Yokoi T."/>
            <person name="Furuya T."/>
            <person name="Kikkawa E."/>
            <person name="Omura Y."/>
            <person name="Abe K."/>
            <person name="Kamihara K."/>
            <person name="Katsuta N."/>
            <person name="Sato K."/>
            <person name="Tanikawa M."/>
            <person name="Yamazaki M."/>
            <person name="Ninomiya K."/>
            <person name="Ishibashi T."/>
            <person name="Yamashita H."/>
            <person name="Murakawa K."/>
            <person name="Fujimori K."/>
            <person name="Tanai H."/>
            <person name="Kimata M."/>
            <person name="Watanabe M."/>
            <person name="Hiraoka S."/>
            <person name="Chiba Y."/>
            <person name="Ishida S."/>
            <person name="Ono Y."/>
            <person name="Takiguchi S."/>
            <person name="Watanabe S."/>
            <person name="Yosida M."/>
            <person name="Hotuta T."/>
            <person name="Kusano J."/>
            <person name="Kanehori K."/>
            <person name="Takahashi-Fujii A."/>
            <person name="Hara H."/>
            <person name="Tanase T.-O."/>
            <person name="Nomura Y."/>
            <person name="Togiya S."/>
            <person name="Komai F."/>
            <person name="Hara R."/>
            <person name="Takeuchi K."/>
            <person name="Arita M."/>
            <person name="Imose N."/>
            <person name="Musashino K."/>
            <person name="Yuuki H."/>
            <person name="Oshima A."/>
            <person name="Sasaki N."/>
            <person name="Aotsuka S."/>
            <person name="Yoshikawa Y."/>
            <person name="Matsunawa H."/>
            <person name="Ichihara T."/>
            <person name="Shiohata N."/>
            <person name="Sano S."/>
            <person name="Moriya S."/>
            <person name="Momiyama H."/>
            <person name="Satoh N."/>
            <person name="Takami S."/>
            <person name="Terashima Y."/>
            <person name="Suzuki O."/>
            <person name="Nakagawa S."/>
            <person name="Senoh A."/>
            <person name="Mizoguchi H."/>
            <person name="Goto Y."/>
            <person name="Shimizu F."/>
            <person name="Wakebe H."/>
            <person name="Hishigaki H."/>
            <person name="Watanabe T."/>
            <person name="Sugiyama A."/>
            <person name="Takemoto M."/>
            <person name="Kawakami B."/>
            <person name="Yamazaki M."/>
            <person name="Watanabe K."/>
            <person name="Kumagai A."/>
            <person name="Itakura S."/>
            <person name="Fukuzumi Y."/>
            <person name="Fujimori Y."/>
            <person name="Komiyama M."/>
            <person name="Tashiro H."/>
            <person name="Tanigami A."/>
            <person name="Fujiwara T."/>
            <person name="Ono T."/>
            <person name="Yamada K."/>
            <person name="Fujii Y."/>
            <person name="Ozaki K."/>
            <person name="Hirao M."/>
            <person name="Ohmori Y."/>
            <person name="Kawabata A."/>
            <person name="Hikiji T."/>
            <person name="Kobatake N."/>
            <person name="Inagaki H."/>
            <person name="Ikema Y."/>
            <person name="Okamoto S."/>
            <person name="Okitani R."/>
            <person name="Kawakami T."/>
            <person name="Noguchi S."/>
            <person name="Itoh T."/>
            <person name="Shigeta K."/>
            <person name="Senba T."/>
            <person name="Matsumura K."/>
            <person name="Nakajima Y."/>
            <person name="Mizuno T."/>
            <person name="Morinaga M."/>
            <person name="Sasaki M."/>
            <person name="Togashi T."/>
            <person name="Oyama M."/>
            <person name="Hata H."/>
            <person name="Watanabe M."/>
            <person name="Komatsu T."/>
            <person name="Mizushima-Sugano J."/>
            <person name="Satoh T."/>
            <person name="Shirai Y."/>
            <person name="Takahashi Y."/>
            <person name="Nakagawa K."/>
            <person name="Okumura K."/>
            <person name="Nagase T."/>
            <person name="Nomura N."/>
            <person name="Kikuchi H."/>
            <person name="Masuho Y."/>
            <person name="Yamashita R."/>
            <person name="Nakai K."/>
            <person name="Yada T."/>
            <person name="Nakamura Y."/>
            <person name="Ohara O."/>
            <person name="Isogai T."/>
            <person name="Sugano S."/>
        </authorList>
    </citation>
    <scope>NUCLEOTIDE SEQUENCE [LARGE SCALE MRNA] (ISOFORMS 2 AND 3)</scope>
    <source>
        <tissue>Trachea</tissue>
    </source>
</reference>
<reference key="3">
    <citation type="journal article" date="2004" name="Proc. Natl. Acad. Sci. U.S.A.">
        <title>Large-scale cDNA transfection screening for genes related to cancer development and progression.</title>
        <authorList>
            <person name="Wan D."/>
            <person name="Gong Y."/>
            <person name="Qin W."/>
            <person name="Zhang P."/>
            <person name="Li J."/>
            <person name="Wei L."/>
            <person name="Zhou X."/>
            <person name="Li H."/>
            <person name="Qiu X."/>
            <person name="Zhong F."/>
            <person name="He L."/>
            <person name="Yu J."/>
            <person name="Yao G."/>
            <person name="Jiang H."/>
            <person name="Qian L."/>
            <person name="Yu Y."/>
            <person name="Shu H."/>
            <person name="Chen X."/>
            <person name="Xu H."/>
            <person name="Guo M."/>
            <person name="Pan Z."/>
            <person name="Chen Y."/>
            <person name="Ge C."/>
            <person name="Yang S."/>
            <person name="Gu J."/>
        </authorList>
    </citation>
    <scope>NUCLEOTIDE SEQUENCE [LARGE SCALE MRNA] (ISOFORM 1)</scope>
</reference>
<reference key="4">
    <citation type="journal article" date="2005" name="Nature">
        <title>Generation and annotation of the DNA sequences of human chromosomes 2 and 4.</title>
        <authorList>
            <person name="Hillier L.W."/>
            <person name="Graves T.A."/>
            <person name="Fulton R.S."/>
            <person name="Fulton L.A."/>
            <person name="Pepin K.H."/>
            <person name="Minx P."/>
            <person name="Wagner-McPherson C."/>
            <person name="Layman D."/>
            <person name="Wylie K."/>
            <person name="Sekhon M."/>
            <person name="Becker M.C."/>
            <person name="Fewell G.A."/>
            <person name="Delehaunty K.D."/>
            <person name="Miner T.L."/>
            <person name="Nash W.E."/>
            <person name="Kremitzki C."/>
            <person name="Oddy L."/>
            <person name="Du H."/>
            <person name="Sun H."/>
            <person name="Bradshaw-Cordum H."/>
            <person name="Ali J."/>
            <person name="Carter J."/>
            <person name="Cordes M."/>
            <person name="Harris A."/>
            <person name="Isak A."/>
            <person name="van Brunt A."/>
            <person name="Nguyen C."/>
            <person name="Du F."/>
            <person name="Courtney L."/>
            <person name="Kalicki J."/>
            <person name="Ozersky P."/>
            <person name="Abbott S."/>
            <person name="Armstrong J."/>
            <person name="Belter E.A."/>
            <person name="Caruso L."/>
            <person name="Cedroni M."/>
            <person name="Cotton M."/>
            <person name="Davidson T."/>
            <person name="Desai A."/>
            <person name="Elliott G."/>
            <person name="Erb T."/>
            <person name="Fronick C."/>
            <person name="Gaige T."/>
            <person name="Haakenson W."/>
            <person name="Haglund K."/>
            <person name="Holmes A."/>
            <person name="Harkins R."/>
            <person name="Kim K."/>
            <person name="Kruchowski S.S."/>
            <person name="Strong C.M."/>
            <person name="Grewal N."/>
            <person name="Goyea E."/>
            <person name="Hou S."/>
            <person name="Levy A."/>
            <person name="Martinka S."/>
            <person name="Mead K."/>
            <person name="McLellan M.D."/>
            <person name="Meyer R."/>
            <person name="Randall-Maher J."/>
            <person name="Tomlinson C."/>
            <person name="Dauphin-Kohlberg S."/>
            <person name="Kozlowicz-Reilly A."/>
            <person name="Shah N."/>
            <person name="Swearengen-Shahid S."/>
            <person name="Snider J."/>
            <person name="Strong J.T."/>
            <person name="Thompson J."/>
            <person name="Yoakum M."/>
            <person name="Leonard S."/>
            <person name="Pearman C."/>
            <person name="Trani L."/>
            <person name="Radionenko M."/>
            <person name="Waligorski J.E."/>
            <person name="Wang C."/>
            <person name="Rock S.M."/>
            <person name="Tin-Wollam A.-M."/>
            <person name="Maupin R."/>
            <person name="Latreille P."/>
            <person name="Wendl M.C."/>
            <person name="Yang S.-P."/>
            <person name="Pohl C."/>
            <person name="Wallis J.W."/>
            <person name="Spieth J."/>
            <person name="Bieri T.A."/>
            <person name="Berkowicz N."/>
            <person name="Nelson J.O."/>
            <person name="Osborne J."/>
            <person name="Ding L."/>
            <person name="Meyer R."/>
            <person name="Sabo A."/>
            <person name="Shotland Y."/>
            <person name="Sinha P."/>
            <person name="Wohldmann P.E."/>
            <person name="Cook L.L."/>
            <person name="Hickenbotham M.T."/>
            <person name="Eldred J."/>
            <person name="Williams D."/>
            <person name="Jones T.A."/>
            <person name="She X."/>
            <person name="Ciccarelli F.D."/>
            <person name="Izaurralde E."/>
            <person name="Taylor J."/>
            <person name="Schmutz J."/>
            <person name="Myers R.M."/>
            <person name="Cox D.R."/>
            <person name="Huang X."/>
            <person name="McPherson J.D."/>
            <person name="Mardis E.R."/>
            <person name="Clifton S.W."/>
            <person name="Warren W.C."/>
            <person name="Chinwalla A.T."/>
            <person name="Eddy S.R."/>
            <person name="Marra M.A."/>
            <person name="Ovcharenko I."/>
            <person name="Furey T.S."/>
            <person name="Miller W."/>
            <person name="Eichler E.E."/>
            <person name="Bork P."/>
            <person name="Suyama M."/>
            <person name="Torrents D."/>
            <person name="Waterston R.H."/>
            <person name="Wilson R.K."/>
        </authorList>
    </citation>
    <scope>NUCLEOTIDE SEQUENCE [LARGE SCALE GENOMIC DNA]</scope>
</reference>
<reference key="5">
    <citation type="submission" date="2005-07" db="EMBL/GenBank/DDBJ databases">
        <authorList>
            <person name="Mural R.J."/>
            <person name="Istrail S."/>
            <person name="Sutton G.G."/>
            <person name="Florea L."/>
            <person name="Halpern A.L."/>
            <person name="Mobarry C.M."/>
            <person name="Lippert R."/>
            <person name="Walenz B."/>
            <person name="Shatkay H."/>
            <person name="Dew I."/>
            <person name="Miller J.R."/>
            <person name="Flanigan M.J."/>
            <person name="Edwards N.J."/>
            <person name="Bolanos R."/>
            <person name="Fasulo D."/>
            <person name="Halldorsson B.V."/>
            <person name="Hannenhalli S."/>
            <person name="Turner R."/>
            <person name="Yooseph S."/>
            <person name="Lu F."/>
            <person name="Nusskern D.R."/>
            <person name="Shue B.C."/>
            <person name="Zheng X.H."/>
            <person name="Zhong F."/>
            <person name="Delcher A.L."/>
            <person name="Huson D.H."/>
            <person name="Kravitz S.A."/>
            <person name="Mouchard L."/>
            <person name="Reinert K."/>
            <person name="Remington K.A."/>
            <person name="Clark A.G."/>
            <person name="Waterman M.S."/>
            <person name="Eichler E.E."/>
            <person name="Adams M.D."/>
            <person name="Hunkapiller M.W."/>
            <person name="Myers E.W."/>
            <person name="Venter J.C."/>
        </authorList>
    </citation>
    <scope>NUCLEOTIDE SEQUENCE [LARGE SCALE GENOMIC DNA]</scope>
</reference>
<reference key="6">
    <citation type="journal article" date="2004" name="Genome Res.">
        <title>The status, quality, and expansion of the NIH full-length cDNA project: the Mammalian Gene Collection (MGC).</title>
        <authorList>
            <consortium name="The MGC Project Team"/>
        </authorList>
    </citation>
    <scope>NUCLEOTIDE SEQUENCE [LARGE SCALE MRNA] (ISOFORM 1)</scope>
    <source>
        <tissue>Cervix</tissue>
        <tissue>Placenta</tissue>
    </source>
</reference>
<reference key="7">
    <citation type="journal article" date="2008" name="Am. J. Physiol.">
        <title>The human zinc transporter SLC39A8 (Zip8) is critical in zinc-mediated cytoprotection in lung epithelia.</title>
        <authorList>
            <person name="Besecker B."/>
            <person name="Bao S."/>
            <person name="Bohacova B."/>
            <person name="Papp A."/>
            <person name="Sadee W."/>
            <person name="Knoell D.L."/>
        </authorList>
    </citation>
    <scope>FUNCTION</scope>
    <scope>SUBCELLULAR LOCATION</scope>
    <scope>INDUCTION</scope>
    <scope>GLYCOSYLATION</scope>
</reference>
<reference key="8">
    <citation type="journal article" date="2009" name="J. Leukoc. Biol.">
        <title>Zinc transporter ZIP8 (SLC39A8) and zinc influence IFN-gamma expression in activated human T cells.</title>
        <authorList>
            <person name="Aydemir T.B."/>
            <person name="Liuzzi J.P."/>
            <person name="McClellan S."/>
            <person name="Cousins R.J."/>
        </authorList>
    </citation>
    <scope>FUNCTION</scope>
    <scope>INDUCTION</scope>
    <scope>SUBCELLULAR LOCATION</scope>
</reference>
<reference key="9">
    <citation type="journal article" date="2012" name="J. Biol. Chem.">
        <title>ZIP8 is an iron and zinc transporter whose cell-surface expression is up-regulated by cellular iron loading.</title>
        <authorList>
            <person name="Wang C.Y."/>
            <person name="Jenkitkasemwong S."/>
            <person name="Duarte S."/>
            <person name="Sparkman B.K."/>
            <person name="Shawki A."/>
            <person name="Mackenzie B."/>
            <person name="Knutson M.D."/>
        </authorList>
    </citation>
    <scope>FUNCTION</scope>
    <scope>TRANSPORTER ACTIVITY</scope>
    <scope>TISSUE SPECIFICITY</scope>
</reference>
<reference key="10">
    <citation type="journal article" date="2013" name="Cell Rep.">
        <title>ZIP8 regulates host defense through zinc-mediated inhibition of NF-kappaB.</title>
        <authorList>
            <person name="Liu M.J."/>
            <person name="Bao S."/>
            <person name="Galvez-Peralta M."/>
            <person name="Pyle C.J."/>
            <person name="Rudawsky A.C."/>
            <person name="Pavlovicz R.E."/>
            <person name="Killilea D.W."/>
            <person name="Li C."/>
            <person name="Nebert D.W."/>
            <person name="Wewers M.D."/>
            <person name="Knoell D.L."/>
        </authorList>
    </citation>
    <scope>FUNCTION</scope>
    <scope>TRANSPORTER ACTIVITY</scope>
    <scope>INDUCTION</scope>
</reference>
<reference key="11">
    <citation type="journal article" date="2016" name="Oncotarget">
        <title>Zinc- and bicarbonate-dependent ZIP8 transporter mediates selenite uptake.</title>
        <authorList>
            <person name="McDermott J.R."/>
            <person name="Geng X."/>
            <person name="Jiang L."/>
            <person name="Galvez-Peralta M."/>
            <person name="Chen F."/>
            <person name="Nebert D.W."/>
            <person name="Liu Z."/>
        </authorList>
    </citation>
    <scope>FUNCTION</scope>
    <scope>TRANSPORTER ACTIVITY</scope>
</reference>
<reference key="12">
    <citation type="journal article" date="2017" name="J. Clin. Invest.">
        <title>Hepatic metal ion transporter ZIP8 regulates manganese homeostasis and manganese-dependent enzyme activity.</title>
        <authorList>
            <person name="Lin W."/>
            <person name="Vann D.R."/>
            <person name="Doulias P.T."/>
            <person name="Wang T."/>
            <person name="Landesberg G."/>
            <person name="Li X."/>
            <person name="Ricciotti E."/>
            <person name="Scalia R."/>
            <person name="He M."/>
            <person name="Hand N.J."/>
            <person name="Rader D.J."/>
        </authorList>
    </citation>
    <scope>FUNCTION</scope>
    <scope>CHARACTERIZATION OF VARIANT THR-391</scope>
</reference>
<reference key="13">
    <citation type="journal article" date="2018" name="J. Clin. Invest.">
        <title>Zinc transporter Slc39a8 is essential for cardiac ventricular compaction.</title>
        <authorList>
            <person name="Lin W."/>
            <person name="Li D."/>
            <person name="Cheng L."/>
            <person name="Li L."/>
            <person name="Liu F."/>
            <person name="Hand N.J."/>
            <person name="Epstein J.A."/>
            <person name="Rader D.J."/>
        </authorList>
    </citation>
    <scope>FUNCTION</scope>
    <scope>TRANSPORTER ACTIVITY</scope>
    <scope>SUBCELLULAR LOCATION</scope>
</reference>
<reference key="14">
    <citation type="journal article" date="2018" name="Metallomics">
        <title>Role of ZIP8 in regulating cell morphology and NF-kappaB/Snail2 signaling.</title>
        <authorList>
            <person name="Geng X."/>
            <person name="Liu L."/>
            <person name="Banes-Berceli A."/>
            <person name="Yang Z."/>
            <person name="Kang P."/>
            <person name="Shen J."/>
            <person name="Tsai K.J."/>
            <person name="Liu Z."/>
        </authorList>
    </citation>
    <scope>FUNCTION</scope>
</reference>
<reference key="15">
    <citation type="journal article" date="2017" name="PLoS ONE">
        <title>Zinc Modulates Endotoxin-Induced Human Macrophage Inflammation through ZIP8 Induction and C/EBPbeta Inhibition.</title>
        <authorList>
            <person name="Pyle C.J."/>
            <person name="Akhter S."/>
            <person name="Bao S."/>
            <person name="Dodd C.E."/>
            <person name="Schlesinger L.S."/>
            <person name="Knoell D.L."/>
        </authorList>
    </citation>
    <scope>FUNCTION</scope>
    <scope>TISSUE SPECIFICITY</scope>
    <scope>INDUCTION</scope>
</reference>
<reference key="16">
    <citation type="journal article" date="2019" name="J. Biol. Chem.">
        <title>The solute carriers ZIP8 and ZIP14 regulate manganese accumulation in brain microvascular endothelial cells and control brain manganese levels.</title>
        <authorList>
            <person name="Steimle B.L."/>
            <person name="Smith F.M."/>
            <person name="Kosman D.J."/>
        </authorList>
    </citation>
    <scope>FUNCTION</scope>
    <scope>TRANSPORTER ACTIVITY</scope>
    <scope>SUBCELLULAR LOCATION</scope>
    <scope>TISSUE SPECIFICITY</scope>
</reference>
<reference key="17">
    <citation type="journal article" date="2015" name="Am. J. Hum. Genet.">
        <title>Autosomal-recessive intellectual disability with cerebellar atrophy syndrome caused by mutation of the manganese and zinc transporter gene SLC39A8.</title>
        <authorList>
            <consortium name="Care4Rare Canada Consortium"/>
            <person name="Boycott K.M."/>
            <person name="Beaulieu C.L."/>
            <person name="Kernohan K.D."/>
            <person name="Gebril O.H."/>
            <person name="Mhanni A."/>
            <person name="Chudley A.E."/>
            <person name="Redl D."/>
            <person name="Qin W."/>
            <person name="Hampson S."/>
            <person name="Kuery S."/>
            <person name="Tetreault M."/>
            <person name="Puffenberger E.G."/>
            <person name="Scott J.N."/>
            <person name="Bezieau S."/>
            <person name="Reis A."/>
            <person name="Uebe S."/>
            <person name="Schumacher J."/>
            <person name="Hegele R.A."/>
            <person name="McLeod D.R."/>
            <person name="Galvez-Peralta M."/>
            <person name="Majewski J."/>
            <person name="Ramaekers V.T."/>
            <person name="Nebert D.W."/>
            <person name="Innes A.M."/>
            <person name="Parboosingh J.S."/>
            <person name="Abou Jamra R."/>
        </authorList>
    </citation>
    <scope>VARIANT CDG2N ARG-38</scope>
    <scope>FUNCTION</scope>
    <scope>TRANSPORTER ACTIVITY</scope>
    <scope>CHARACTERIZATION OF VARIANT CDG2N ARG-38</scope>
</reference>
<reference key="18">
    <citation type="journal article" date="2015" name="Am. J. Hum. Genet.">
        <title>SLC39A8 deficiency: a disorder of manganese transport and glycosylation.</title>
        <authorList>
            <person name="Park J.H."/>
            <person name="Hogrebe M."/>
            <person name="Grueneberg M."/>
            <person name="DuChesne I."/>
            <person name="von der Heiden A.L."/>
            <person name="Reunert J."/>
            <person name="Schlingmann K.P."/>
            <person name="Boycott K.M."/>
            <person name="Beaulieu C.L."/>
            <person name="Mhanni A.A."/>
            <person name="Innes A.M."/>
            <person name="Hoertnagel K."/>
            <person name="Biskup S."/>
            <person name="Gleixner E.M."/>
            <person name="Kurlemann G."/>
            <person name="Fiedler B."/>
            <person name="Omran H."/>
            <person name="Rutsch F."/>
            <person name="Wada Y."/>
            <person name="Tsiakas K."/>
            <person name="Santer R."/>
            <person name="Nebert D.W."/>
            <person name="Rust S."/>
            <person name="Marquardt T."/>
        </authorList>
    </citation>
    <scope>VARIANTS CDG2N MET-33; ARG-38; CYS-204; THR-335 AND ASN-340</scope>
</reference>
<reference key="19">
    <citation type="journal article" date="2016" name="Hum. Mol. Genet.">
        <title>A blood pressure-associated variant of the SLC39A8 gene influences cellular cadmium accumulation and toxicity.</title>
        <authorList>
            <person name="Zhang R."/>
            <person name="Witkowska K."/>
            <person name="Afonso Guerra-Assuncao J."/>
            <person name="Ren M."/>
            <person name="Ng F.L."/>
            <person name="Mauro C."/>
            <person name="Tucker A.T."/>
            <person name="Caulfield M.J."/>
            <person name="Ye S."/>
        </authorList>
    </citation>
    <scope>FUNCTION</scope>
    <scope>TRANSPORTER ACTIVITY</scope>
    <scope>CHARACTERIZATION OF VARIANT THR-391</scope>
</reference>
<reference key="20">
    <citation type="journal article" date="2017" name="J. Inherit. Metab. Dis.">
        <title>A SLC39A8 variant causes manganese deficiency, and glycosylation and mitochondrial disorders.</title>
        <authorList>
            <person name="Riley L.G."/>
            <person name="Cowley M.J."/>
            <person name="Gayevskiy V."/>
            <person name="Roscioli T."/>
            <person name="Thorburn D.R."/>
            <person name="Prelog K."/>
            <person name="Bahlo M."/>
            <person name="Sue C.M."/>
            <person name="Balasubramaniam S."/>
            <person name="Christodoulou J."/>
        </authorList>
    </citation>
    <scope>DISEASE</scope>
    <scope>VARIANT SER-113</scope>
    <scope>CHARACTERIZATION OF VARIANT SER-113</scope>
</reference>
<reference key="21">
    <citation type="journal article" date="2018" name="Sci. Rep.">
        <title>Functional analysis of SLC39A8 mutations and their implications for manganese deficiency and mitochondrial disorders.</title>
        <authorList>
            <person name="Choi E.K."/>
            <person name="Nguyen T.T."/>
            <person name="Gupta N."/>
            <person name="Iwase S."/>
            <person name="Seo Y.A."/>
        </authorList>
    </citation>
    <scope>CHARACTERIZATION OF VARIANT CDG2N ARG-38</scope>
    <scope>CHARACTERIZATION OF VARIANT SER-113</scope>
    <scope>FUNCTION</scope>
    <scope>TRANSPORTER ACTIVITY</scope>
    <scope>BIOPHYSICOCHEMICAL PROPERTIES</scope>
    <scope>INDUCTION</scope>
</reference>
<feature type="signal peptide" evidence="3">
    <location>
        <begin position="1"/>
        <end position="22"/>
    </location>
</feature>
<feature type="chain" id="PRO_0000312707" description="Metal cation symporter ZIP8" evidence="3">
    <location>
        <begin position="23"/>
        <end position="460"/>
    </location>
</feature>
<feature type="topological domain" description="Extracellular" evidence="1">
    <location>
        <begin position="23"/>
        <end position="132"/>
    </location>
</feature>
<feature type="transmembrane region" description="Helical" evidence="3">
    <location>
        <begin position="133"/>
        <end position="153"/>
    </location>
</feature>
<feature type="topological domain" description="Cytoplasmic" evidence="1">
    <location>
        <begin position="154"/>
        <end position="160"/>
    </location>
</feature>
<feature type="transmembrane region" description="Helical" evidence="3">
    <location>
        <begin position="161"/>
        <end position="181"/>
    </location>
</feature>
<feature type="topological domain" description="Extracellular" evidence="1">
    <location>
        <begin position="182"/>
        <end position="191"/>
    </location>
</feature>
<feature type="transmembrane region" description="Helical" evidence="3">
    <location>
        <begin position="192"/>
        <end position="212"/>
    </location>
</feature>
<feature type="topological domain" description="Cytoplasmic" evidence="1">
    <location>
        <begin position="213"/>
        <end position="365"/>
    </location>
</feature>
<feature type="transmembrane region" description="Helical" evidence="3">
    <location>
        <begin position="366"/>
        <end position="386"/>
    </location>
</feature>
<feature type="topological domain" description="Extracellular" evidence="1">
    <location>
        <begin position="387"/>
        <end position="388"/>
    </location>
</feature>
<feature type="transmembrane region" description="Helical" evidence="3">
    <location>
        <begin position="389"/>
        <end position="409"/>
    </location>
</feature>
<feature type="topological domain" description="Cytoplasmic" evidence="1">
    <location>
        <begin position="410"/>
        <end position="429"/>
    </location>
</feature>
<feature type="transmembrane region" description="Helical" evidence="3">
    <location>
        <begin position="430"/>
        <end position="450"/>
    </location>
</feature>
<feature type="topological domain" description="Extracellular" evidence="1">
    <location>
        <begin position="451"/>
        <end position="460"/>
    </location>
</feature>
<feature type="short sequence motif" description="XEXPHE-motif" evidence="24">
    <location>
        <begin position="343"/>
        <end position="348"/>
    </location>
</feature>
<feature type="glycosylation site" description="N-linked (GlcNAc...) asparagine" evidence="3">
    <location>
        <position position="40"/>
    </location>
</feature>
<feature type="glycosylation site" description="N-linked (GlcNAc...) asparagine" evidence="3">
    <location>
        <position position="88"/>
    </location>
</feature>
<feature type="splice variant" id="VSP_029884" description="In isoform 2." evidence="21">
    <location>
        <begin position="1"/>
        <end position="67"/>
    </location>
</feature>
<feature type="splice variant" id="VSP_029885" description="In isoform 2." evidence="21">
    <original>QLHFN</original>
    <variation>MHQHA</variation>
    <location>
        <begin position="68"/>
        <end position="72"/>
    </location>
</feature>
<feature type="splice variant" id="VSP_043675" description="In isoform 3." evidence="21">
    <original>VTGRKTDFTFFMIQNAGMLTGFTAILLITLYAGEIELE</original>
    <variation>IIKWATDDIKSQLHLLWIYTAR</variation>
    <location>
        <begin position="423"/>
        <end position="460"/>
    </location>
</feature>
<feature type="sequence variant" id="VAR_076241" description="In CDG2N; dbSNP:rs373562040." evidence="10">
    <original>V</original>
    <variation>M</variation>
    <location>
        <position position="33"/>
    </location>
</feature>
<feature type="sequence variant" id="VAR_076242" description="In CDG2N; loss of manganese ion transmembrane transport; loss of localization to the plasma membrane; retained in the endoplasmic reticulum; no effect on protein abundance; dbSNP:rs778210210." evidence="9 10 17">
    <original>G</original>
    <variation>R</variation>
    <location>
        <position position="38"/>
    </location>
</feature>
<feature type="sequence variant" id="VAR_083148" description="Found in patients with features of Leigh syndrome; likely pathogenic; no effect on protein abundance; loss of localization to the plasma membrane; retained in the endoplasmic reticulum; loss of manganese ion transmembrane transport; dbSNP:rs1444255127." evidence="13">
    <original>C</original>
    <variation>S</variation>
    <location>
        <position position="113"/>
    </location>
</feature>
<feature type="sequence variant" id="VAR_076243" description="In CDG2N; dbSNP:rs779241085." evidence="10">
    <original>G</original>
    <variation>C</variation>
    <location>
        <position position="204"/>
    </location>
</feature>
<feature type="sequence variant" id="VAR_076244" description="In CDG2N; dbSNP:rs864309660." evidence="10">
    <original>S</original>
    <variation>T</variation>
    <location>
        <position position="335"/>
    </location>
</feature>
<feature type="sequence variant" id="VAR_076245" description="In CDG2N; no detectable serum or urinary manganese levels in an affected individual who also carries R-38 mutation; dbSNP:rs864309659." evidence="10">
    <original>I</original>
    <variation>N</variation>
    <location>
        <position position="340"/>
    </location>
</feature>
<feature type="sequence variant" id="VAR_037551" description="No effect on protein abundance; decreased cadmium ion transmembrane transport; increased resistance to cadmium cytotoxicity; associated with decreased activity of manganese-dependent enzymes; dbSNP:rs13107325." evidence="12 15">
    <original>A</original>
    <variation>T</variation>
    <location>
        <position position="391"/>
    </location>
</feature>
<feature type="sequence conflict" description="In Ref. 3; BAB55268." evidence="23" ref="3">
    <original>K</original>
    <variation>E</variation>
    <location>
        <position position="241"/>
    </location>
</feature>
<dbReference type="EMBL" id="AB020970">
    <property type="protein sequence ID" value="BAA96442.1"/>
    <property type="molecule type" value="mRNA"/>
</dbReference>
<dbReference type="EMBL" id="AB040120">
    <property type="protein sequence ID" value="BAB21559.1"/>
    <property type="molecule type" value="mRNA"/>
</dbReference>
<dbReference type="EMBL" id="AK027652">
    <property type="protein sequence ID" value="BAB55268.1"/>
    <property type="molecule type" value="mRNA"/>
</dbReference>
<dbReference type="EMBL" id="AK304274">
    <property type="protein sequence ID" value="BAG65135.1"/>
    <property type="molecule type" value="mRNA"/>
</dbReference>
<dbReference type="EMBL" id="AF193052">
    <property type="protein sequence ID" value="AAG22480.1"/>
    <property type="molecule type" value="mRNA"/>
</dbReference>
<dbReference type="EMBL" id="AC098487">
    <property type="status" value="NOT_ANNOTATED_CDS"/>
    <property type="molecule type" value="Genomic_DNA"/>
</dbReference>
<dbReference type="EMBL" id="AP002023">
    <property type="status" value="NOT_ANNOTATED_CDS"/>
    <property type="molecule type" value="Genomic_DNA"/>
</dbReference>
<dbReference type="EMBL" id="CH471057">
    <property type="protein sequence ID" value="EAX06130.1"/>
    <property type="molecule type" value="Genomic_DNA"/>
</dbReference>
<dbReference type="EMBL" id="BC001320">
    <property type="protein sequence ID" value="AAH01320.1"/>
    <property type="molecule type" value="mRNA"/>
</dbReference>
<dbReference type="EMBL" id="BC012125">
    <property type="protein sequence ID" value="AAH12125.1"/>
    <property type="molecule type" value="mRNA"/>
</dbReference>
<dbReference type="CCDS" id="CCDS3656.1">
    <molecule id="Q9C0K1-1"/>
</dbReference>
<dbReference type="RefSeq" id="NP_001128618.1">
    <molecule id="Q9C0K1-1"/>
    <property type="nucleotide sequence ID" value="NM_001135146.2"/>
</dbReference>
<dbReference type="RefSeq" id="NP_001128619.1">
    <molecule id="Q9C0K1-3"/>
    <property type="nucleotide sequence ID" value="NM_001135147.1"/>
</dbReference>
<dbReference type="RefSeq" id="NP_001128620.1">
    <molecule id="Q9C0K1-2"/>
    <property type="nucleotide sequence ID" value="NM_001135148.2"/>
</dbReference>
<dbReference type="RefSeq" id="NP_071437.3">
    <molecule id="Q9C0K1-1"/>
    <property type="nucleotide sequence ID" value="NM_022154.5"/>
</dbReference>
<dbReference type="RefSeq" id="XP_005263234.1">
    <property type="nucleotide sequence ID" value="XM_005263177.1"/>
</dbReference>
<dbReference type="RefSeq" id="XP_016864029.1">
    <property type="nucleotide sequence ID" value="XM_017008540.1"/>
</dbReference>
<dbReference type="RefSeq" id="XP_016864030.1">
    <molecule id="Q9C0K1-2"/>
    <property type="nucleotide sequence ID" value="XM_017008541.2"/>
</dbReference>
<dbReference type="RefSeq" id="XP_047272026.1">
    <molecule id="Q9C0K1-1"/>
    <property type="nucleotide sequence ID" value="XM_047416070.1"/>
</dbReference>
<dbReference type="RefSeq" id="XP_054206680.1">
    <molecule id="Q9C0K1-1"/>
    <property type="nucleotide sequence ID" value="XM_054350705.1"/>
</dbReference>
<dbReference type="RefSeq" id="XP_054206681.1">
    <molecule id="Q9C0K1-2"/>
    <property type="nucleotide sequence ID" value="XM_054350706.1"/>
</dbReference>
<dbReference type="SMR" id="Q9C0K1"/>
<dbReference type="BioGRID" id="122072">
    <property type="interactions" value="38"/>
</dbReference>
<dbReference type="FunCoup" id="Q9C0K1">
    <property type="interactions" value="259"/>
</dbReference>
<dbReference type="IntAct" id="Q9C0K1">
    <property type="interactions" value="34"/>
</dbReference>
<dbReference type="MINT" id="Q9C0K1"/>
<dbReference type="STRING" id="9606.ENSP00000378310"/>
<dbReference type="DrugBank" id="DB14533">
    <property type="generic name" value="Zinc chloride"/>
</dbReference>
<dbReference type="DrugBank" id="DB14548">
    <property type="generic name" value="Zinc sulfate, unspecified form"/>
</dbReference>
<dbReference type="TCDB" id="2.A.5.4.15">
    <property type="family name" value="the zinc (zn(2+))-iron (fe(2+)) permease (zip) family"/>
</dbReference>
<dbReference type="GlyCosmos" id="Q9C0K1">
    <property type="glycosylation" value="2 sites, No reported glycans"/>
</dbReference>
<dbReference type="GlyGen" id="Q9C0K1">
    <property type="glycosylation" value="6 sites, 1 N-linked glycan (1 site), 1 O-linked glycan (1 site)"/>
</dbReference>
<dbReference type="iPTMnet" id="Q9C0K1"/>
<dbReference type="PhosphoSitePlus" id="Q9C0K1"/>
<dbReference type="SwissPalm" id="Q9C0K1"/>
<dbReference type="BioMuta" id="SLC39A8"/>
<dbReference type="DMDM" id="74733496"/>
<dbReference type="jPOST" id="Q9C0K1"/>
<dbReference type="MassIVE" id="Q9C0K1"/>
<dbReference type="PaxDb" id="9606-ENSP00000378310"/>
<dbReference type="PeptideAtlas" id="Q9C0K1"/>
<dbReference type="ProteomicsDB" id="80068">
    <molecule id="Q9C0K1-1"/>
</dbReference>
<dbReference type="ProteomicsDB" id="80069">
    <molecule id="Q9C0K1-2"/>
</dbReference>
<dbReference type="ProteomicsDB" id="80070">
    <molecule id="Q9C0K1-3"/>
</dbReference>
<dbReference type="Antibodypedia" id="45037">
    <property type="antibodies" value="176 antibodies from 29 providers"/>
</dbReference>
<dbReference type="DNASU" id="64116"/>
<dbReference type="Ensembl" id="ENST00000356736.5">
    <molecule id="Q9C0K1-1"/>
    <property type="protein sequence ID" value="ENSP00000349174.4"/>
    <property type="gene ID" value="ENSG00000138821.14"/>
</dbReference>
<dbReference type="Ensembl" id="ENST00000394833.6">
    <molecule id="Q9C0K1-1"/>
    <property type="protein sequence ID" value="ENSP00000378310.2"/>
    <property type="gene ID" value="ENSG00000138821.14"/>
</dbReference>
<dbReference type="Ensembl" id="ENST00000682227.1">
    <molecule id="Q9C0K1-1"/>
    <property type="protein sequence ID" value="ENSP00000508363.1"/>
    <property type="gene ID" value="ENSG00000138821.14"/>
</dbReference>
<dbReference type="Ensembl" id="ENST00000682932.1">
    <molecule id="Q9C0K1-1"/>
    <property type="protein sequence ID" value="ENSP00000507414.1"/>
    <property type="gene ID" value="ENSG00000138821.14"/>
</dbReference>
<dbReference type="Ensembl" id="ENST00000683412.1">
    <molecule id="Q9C0K1-1"/>
    <property type="protein sequence ID" value="ENSP00000507538.1"/>
    <property type="gene ID" value="ENSG00000138821.14"/>
</dbReference>
<dbReference type="GeneID" id="64116"/>
<dbReference type="KEGG" id="hsa:64116"/>
<dbReference type="MANE-Select" id="ENST00000356736.5">
    <property type="protein sequence ID" value="ENSP00000349174.4"/>
    <property type="RefSeq nucleotide sequence ID" value="NM_001135146.2"/>
    <property type="RefSeq protein sequence ID" value="NP_001128618.1"/>
</dbReference>
<dbReference type="UCSC" id="uc003hwb.2">
    <molecule id="Q9C0K1-1"/>
    <property type="organism name" value="human"/>
</dbReference>
<dbReference type="AGR" id="HGNC:20862"/>
<dbReference type="CTD" id="64116"/>
<dbReference type="DisGeNET" id="64116"/>
<dbReference type="GeneCards" id="SLC39A8"/>
<dbReference type="GeneReviews" id="SLC39A8"/>
<dbReference type="HGNC" id="HGNC:20862">
    <property type="gene designation" value="SLC39A8"/>
</dbReference>
<dbReference type="HPA" id="ENSG00000138821">
    <property type="expression patterns" value="Tissue enhanced (lung)"/>
</dbReference>
<dbReference type="MalaCards" id="SLC39A8"/>
<dbReference type="MIM" id="608732">
    <property type="type" value="gene"/>
</dbReference>
<dbReference type="MIM" id="616721">
    <property type="type" value="phenotype"/>
</dbReference>
<dbReference type="neXtProt" id="NX_Q9C0K1"/>
<dbReference type="OpenTargets" id="ENSG00000138821"/>
<dbReference type="Orphanet" id="468699">
    <property type="disease" value="SLC39A8-CDG"/>
</dbReference>
<dbReference type="PharmGKB" id="PA134931507"/>
<dbReference type="VEuPathDB" id="HostDB:ENSG00000138821"/>
<dbReference type="eggNOG" id="KOG2693">
    <property type="taxonomic scope" value="Eukaryota"/>
</dbReference>
<dbReference type="GeneTree" id="ENSGT00940000158926"/>
<dbReference type="HOGENOM" id="CLU_015114_13_0_1"/>
<dbReference type="InParanoid" id="Q9C0K1"/>
<dbReference type="OMA" id="ITMFAGE"/>
<dbReference type="OrthoDB" id="200954at2759"/>
<dbReference type="PAN-GO" id="Q9C0K1">
    <property type="GO annotations" value="4 GO annotations based on evolutionary models"/>
</dbReference>
<dbReference type="PhylomeDB" id="Q9C0K1"/>
<dbReference type="TreeFam" id="TF318470"/>
<dbReference type="PathwayCommons" id="Q9C0K1"/>
<dbReference type="Reactome" id="R-HSA-442380">
    <property type="pathway name" value="Zinc influx into cells by the SLC39 gene family"/>
</dbReference>
<dbReference type="SABIO-RK" id="Q9C0K1"/>
<dbReference type="SignaLink" id="Q9C0K1"/>
<dbReference type="BioGRID-ORCS" id="64116">
    <property type="hits" value="17 hits in 1159 CRISPR screens"/>
</dbReference>
<dbReference type="ChiTaRS" id="SLC39A8">
    <property type="organism name" value="human"/>
</dbReference>
<dbReference type="GenomeRNAi" id="64116"/>
<dbReference type="Pharos" id="Q9C0K1">
    <property type="development level" value="Tbio"/>
</dbReference>
<dbReference type="PRO" id="PR:Q9C0K1"/>
<dbReference type="Proteomes" id="UP000005640">
    <property type="component" value="Chromosome 4"/>
</dbReference>
<dbReference type="RNAct" id="Q9C0K1">
    <property type="molecule type" value="protein"/>
</dbReference>
<dbReference type="Bgee" id="ENSG00000138821">
    <property type="expression patterns" value="Expressed in parotid gland and 195 other cell types or tissues"/>
</dbReference>
<dbReference type="ExpressionAtlas" id="Q9C0K1">
    <property type="expression patterns" value="baseline and differential"/>
</dbReference>
<dbReference type="GO" id="GO:0016324">
    <property type="term" value="C:apical plasma membrane"/>
    <property type="evidence" value="ECO:0000314"/>
    <property type="project" value="UniProtKB"/>
</dbReference>
<dbReference type="GO" id="GO:0016323">
    <property type="term" value="C:basolateral plasma membrane"/>
    <property type="evidence" value="ECO:0000314"/>
    <property type="project" value="UniProtKB"/>
</dbReference>
<dbReference type="GO" id="GO:0005765">
    <property type="term" value="C:lysosomal membrane"/>
    <property type="evidence" value="ECO:0000314"/>
    <property type="project" value="UniProtKB"/>
</dbReference>
<dbReference type="GO" id="GO:0031090">
    <property type="term" value="C:organelle membrane"/>
    <property type="evidence" value="ECO:0000314"/>
    <property type="project" value="UniProtKB"/>
</dbReference>
<dbReference type="GO" id="GO:0005886">
    <property type="term" value="C:plasma membrane"/>
    <property type="evidence" value="ECO:0000314"/>
    <property type="project" value="UniProtKB"/>
</dbReference>
<dbReference type="GO" id="GO:0140410">
    <property type="term" value="F:monoatomic cation:bicarbonate symporter activity"/>
    <property type="evidence" value="ECO:0000314"/>
    <property type="project" value="UniProtKB"/>
</dbReference>
<dbReference type="GO" id="GO:0005385">
    <property type="term" value="F:zinc ion transmembrane transporter activity"/>
    <property type="evidence" value="ECO:0000318"/>
    <property type="project" value="GO_Central"/>
</dbReference>
<dbReference type="GO" id="GO:0140412">
    <property type="term" value="F:zinc:bicarbonate symporter activity"/>
    <property type="evidence" value="ECO:0007669"/>
    <property type="project" value="Ensembl"/>
</dbReference>
<dbReference type="GO" id="GO:0006525">
    <property type="term" value="P:arginine metabolic process"/>
    <property type="evidence" value="ECO:0000250"/>
    <property type="project" value="UniProtKB"/>
</dbReference>
<dbReference type="GO" id="GO:0015701">
    <property type="term" value="P:bicarbonate transport"/>
    <property type="evidence" value="ECO:0000250"/>
    <property type="project" value="UniProtKB"/>
</dbReference>
<dbReference type="GO" id="GO:0070574">
    <property type="term" value="P:cadmium ion transmembrane transport"/>
    <property type="evidence" value="ECO:0000314"/>
    <property type="project" value="UniProtKB"/>
</dbReference>
<dbReference type="GO" id="GO:1990079">
    <property type="term" value="P:cartilage homeostasis"/>
    <property type="evidence" value="ECO:0000250"/>
    <property type="project" value="UniProtKB"/>
</dbReference>
<dbReference type="GO" id="GO:0098849">
    <property type="term" value="P:cellular detoxification of cadmium ion"/>
    <property type="evidence" value="ECO:0000315"/>
    <property type="project" value="UniProtKB"/>
</dbReference>
<dbReference type="GO" id="GO:0006824">
    <property type="term" value="P:cobalt ion transport"/>
    <property type="evidence" value="ECO:0000250"/>
    <property type="project" value="UniProtKB"/>
</dbReference>
<dbReference type="GO" id="GO:0006351">
    <property type="term" value="P:DNA-templated transcription"/>
    <property type="evidence" value="ECO:0007669"/>
    <property type="project" value="Ensembl"/>
</dbReference>
<dbReference type="GO" id="GO:0030198">
    <property type="term" value="P:extracellular matrix organization"/>
    <property type="evidence" value="ECO:0000315"/>
    <property type="project" value="UniProtKB"/>
</dbReference>
<dbReference type="GO" id="GO:0030026">
    <property type="term" value="P:intracellular manganese ion homeostasis"/>
    <property type="evidence" value="ECO:0000250"/>
    <property type="project" value="UniProtKB"/>
</dbReference>
<dbReference type="GO" id="GO:0030003">
    <property type="term" value="P:intracellular monoatomic cation homeostasis"/>
    <property type="evidence" value="ECO:0000318"/>
    <property type="project" value="GO_Central"/>
</dbReference>
<dbReference type="GO" id="GO:0006882">
    <property type="term" value="P:intracellular zinc ion homeostasis"/>
    <property type="evidence" value="ECO:0000314"/>
    <property type="project" value="UniProtKB"/>
</dbReference>
<dbReference type="GO" id="GO:0098711">
    <property type="term" value="P:iron ion import across plasma membrane"/>
    <property type="evidence" value="ECO:0000314"/>
    <property type="project" value="UniProtKB"/>
</dbReference>
<dbReference type="GO" id="GO:0061757">
    <property type="term" value="P:leukocyte adhesion to arterial endothelial cell"/>
    <property type="evidence" value="ECO:0000250"/>
    <property type="project" value="UniProtKB"/>
</dbReference>
<dbReference type="GO" id="GO:0071421">
    <property type="term" value="P:manganese ion transmembrane transport"/>
    <property type="evidence" value="ECO:0000315"/>
    <property type="project" value="UniProtKB"/>
</dbReference>
<dbReference type="GO" id="GO:0015694">
    <property type="term" value="P:mercury ion transport"/>
    <property type="evidence" value="ECO:0007669"/>
    <property type="project" value="Ensembl"/>
</dbReference>
<dbReference type="GO" id="GO:1990540">
    <property type="term" value="P:mitochondrial manganese ion transmembrane transport"/>
    <property type="evidence" value="ECO:0000315"/>
    <property type="project" value="UniProtKB"/>
</dbReference>
<dbReference type="GO" id="GO:0043124">
    <property type="term" value="P:negative regulation of canonical NF-kappaB signal transduction"/>
    <property type="evidence" value="ECO:0000315"/>
    <property type="project" value="UniProtKB"/>
</dbReference>
<dbReference type="GO" id="GO:0050728">
    <property type="term" value="P:negative regulation of inflammatory response"/>
    <property type="evidence" value="ECO:0000315"/>
    <property type="project" value="UniProtKB"/>
</dbReference>
<dbReference type="GO" id="GO:0097080">
    <property type="term" value="P:plasma membrane selenite transport"/>
    <property type="evidence" value="ECO:0000314"/>
    <property type="project" value="UniProtKB"/>
</dbReference>
<dbReference type="GO" id="GO:0006487">
    <property type="term" value="P:protein N-linked glycosylation"/>
    <property type="evidence" value="ECO:0000250"/>
    <property type="project" value="UniProtKB"/>
</dbReference>
<dbReference type="GO" id="GO:0006355">
    <property type="term" value="P:regulation of DNA-templated transcription"/>
    <property type="evidence" value="ECO:0000315"/>
    <property type="project" value="UniProtKB"/>
</dbReference>
<dbReference type="GO" id="GO:0042391">
    <property type="term" value="P:regulation of membrane potential"/>
    <property type="evidence" value="ECO:0000315"/>
    <property type="project" value="UniProtKB"/>
</dbReference>
<dbReference type="GO" id="GO:0071578">
    <property type="term" value="P:zinc ion import across plasma membrane"/>
    <property type="evidence" value="ECO:0000315"/>
    <property type="project" value="UniProtKB"/>
</dbReference>
<dbReference type="GO" id="GO:0071577">
    <property type="term" value="P:zinc ion transmembrane transport"/>
    <property type="evidence" value="ECO:0000314"/>
    <property type="project" value="UniProtKB"/>
</dbReference>
<dbReference type="GO" id="GO:0006829">
    <property type="term" value="P:zinc ion transport"/>
    <property type="evidence" value="ECO:0000315"/>
    <property type="project" value="UniProtKB"/>
</dbReference>
<dbReference type="InterPro" id="IPR003689">
    <property type="entry name" value="ZIP"/>
</dbReference>
<dbReference type="InterPro" id="IPR050799">
    <property type="entry name" value="ZIP_Transporter"/>
</dbReference>
<dbReference type="PANTHER" id="PTHR12191:SF2">
    <property type="entry name" value="METAL CATION SYMPORTER ZIP8"/>
    <property type="match status" value="1"/>
</dbReference>
<dbReference type="PANTHER" id="PTHR12191">
    <property type="entry name" value="SOLUTE CARRIER FAMILY 39"/>
    <property type="match status" value="1"/>
</dbReference>
<dbReference type="Pfam" id="PF02535">
    <property type="entry name" value="Zip"/>
    <property type="match status" value="1"/>
</dbReference>
<accession>Q9C0K1</accession>
<accession>B4E2H3</accession>
<accession>Q96SM9</accession>
<accession>Q9BVC0</accession>
<accession>Q9NSA4</accession>
<organism>
    <name type="scientific">Homo sapiens</name>
    <name type="common">Human</name>
    <dbReference type="NCBI Taxonomy" id="9606"/>
    <lineage>
        <taxon>Eukaryota</taxon>
        <taxon>Metazoa</taxon>
        <taxon>Chordata</taxon>
        <taxon>Craniata</taxon>
        <taxon>Vertebrata</taxon>
        <taxon>Euteleostomi</taxon>
        <taxon>Mammalia</taxon>
        <taxon>Eutheria</taxon>
        <taxon>Euarchontoglires</taxon>
        <taxon>Primates</taxon>
        <taxon>Haplorrhini</taxon>
        <taxon>Catarrhini</taxon>
        <taxon>Hominidae</taxon>
        <taxon>Homo</taxon>
    </lineage>
</organism>
<evidence type="ECO:0000250" key="1">
    <source>
        <dbReference type="UniProtKB" id="Q5FVQ0"/>
    </source>
</evidence>
<evidence type="ECO:0000250" key="2">
    <source>
        <dbReference type="UniProtKB" id="Q91W10"/>
    </source>
</evidence>
<evidence type="ECO:0000255" key="3"/>
<evidence type="ECO:0000269" key="4">
    <source>
    </source>
</evidence>
<evidence type="ECO:0000269" key="5">
    <source>
    </source>
</evidence>
<evidence type="ECO:0000269" key="6">
    <source>
    </source>
</evidence>
<evidence type="ECO:0000269" key="7">
    <source>
    </source>
</evidence>
<evidence type="ECO:0000269" key="8">
    <source>
    </source>
</evidence>
<evidence type="ECO:0000269" key="9">
    <source>
    </source>
</evidence>
<evidence type="ECO:0000269" key="10">
    <source>
    </source>
</evidence>
<evidence type="ECO:0000269" key="11">
    <source>
    </source>
</evidence>
<evidence type="ECO:0000269" key="12">
    <source>
    </source>
</evidence>
<evidence type="ECO:0000269" key="13">
    <source>
    </source>
</evidence>
<evidence type="ECO:0000269" key="14">
    <source>
    </source>
</evidence>
<evidence type="ECO:0000269" key="15">
    <source>
    </source>
</evidence>
<evidence type="ECO:0000269" key="16">
    <source>
    </source>
</evidence>
<evidence type="ECO:0000269" key="17">
    <source>
    </source>
</evidence>
<evidence type="ECO:0000269" key="18">
    <source>
    </source>
</evidence>
<evidence type="ECO:0000269" key="19">
    <source>
    </source>
</evidence>
<evidence type="ECO:0000303" key="20">
    <source>
    </source>
</evidence>
<evidence type="ECO:0000303" key="21">
    <source>
    </source>
</evidence>
<evidence type="ECO:0000303" key="22">
    <source>
    </source>
</evidence>
<evidence type="ECO:0000305" key="23"/>
<evidence type="ECO:0000305" key="24">
    <source>
    </source>
</evidence>
<evidence type="ECO:0000305" key="25">
    <source>
    </source>
</evidence>
<evidence type="ECO:0000305" key="26">
    <source>
    </source>
</evidence>
<evidence type="ECO:0000305" key="27">
    <source>
    </source>
</evidence>
<evidence type="ECO:0000305" key="28">
    <source>
    </source>
</evidence>
<evidence type="ECO:0000312" key="29">
    <source>
        <dbReference type="HGNC" id="HGNC:20862"/>
    </source>
</evidence>
<gene>
    <name evidence="29" type="primary">SLC39A8</name>
    <name evidence="20" type="synonym">BIGM103</name>
    <name evidence="22" type="synonym">ZIP8</name>
    <name type="ORF">PP3105</name>
</gene>
<protein>
    <recommendedName>
        <fullName evidence="24">Metal cation symporter ZIP8</fullName>
    </recommendedName>
    <alternativeName>
        <fullName evidence="20">BCG-induced integral membrane protein in monocyte clone 103 protein</fullName>
    </alternativeName>
    <alternativeName>
        <fullName>LIV-1 subfamily of ZIP zinc transporter 6</fullName>
        <shortName>LZT-Hs6</shortName>
    </alternativeName>
    <alternativeName>
        <fullName evidence="29">Solute carrier family 39 member 8</fullName>
    </alternativeName>
    <alternativeName>
        <fullName evidence="2">Zrt- and Irt-like protein 8</fullName>
        <shortName evidence="2">ZIP-8</shortName>
    </alternativeName>
</protein>
<sequence>MAPGRAVAGLLLLAAAGLGGVAEGPGLAFSEDVLSVFGANLSLSAAQLQHLLEQMGAASRVGVPEPGQLHFNQCLTAEEIFSLHGFSNATQITSSKFSVICPAVLQQLNFHPCEDRPKHKTRPSHSEVWGYGFLSVTIINLASLLGLILTPLIKKSYFPKILTFFVGLAIGTLFSNAIFQLIPEAFGFDPKVDSYVEKAVAVFGGFYLLFFFERMLKMLLKTYGQNGHTHFGNDNFGPQEKTHQPKALPAINGVTCYANPAVTEANGHIHFDNVSVVSLQDGKKEPSSCTCLKGPKLSEIGTIAWMITLCDALHNFIDGLAIGASCTLSLLQGLSTSIAILCEEFPHELGDFVILLNAGMSTRQALLFNFLSACSCYVGLAFGILVGNNFAPNIIFALAGGMFLYISLADMFPEMNDMLREKVTGRKTDFTFFMIQNAGMLTGFTAILLITLYAGEIELE</sequence>
<keyword id="KW-0025">Alternative splicing</keyword>
<keyword id="KW-1003">Cell membrane</keyword>
<keyword id="KW-0900">Congenital disorder of glycosylation</keyword>
<keyword id="KW-0325">Glycoprotein</keyword>
<keyword id="KW-0406">Ion transport</keyword>
<keyword id="KW-0458">Lysosome</keyword>
<keyword id="KW-0472">Membrane</keyword>
<keyword id="KW-1267">Proteomics identification</keyword>
<keyword id="KW-1185">Reference proteome</keyword>
<keyword id="KW-0732">Signal</keyword>
<keyword id="KW-0769">Symport</keyword>
<keyword id="KW-0812">Transmembrane</keyword>
<keyword id="KW-1133">Transmembrane helix</keyword>
<keyword id="KW-0813">Transport</keyword>
<keyword id="KW-0862">Zinc</keyword>
<keyword id="KW-0864">Zinc transport</keyword>
<comment type="function">
    <text evidence="2 4 5 6 7 8 9 11 12 14 15 16 17 18 19">Electroneutral divalent metal cation:bicarbonate symporter of the plasma membrane mediating the cellular uptake of zinc and manganese, two divalent metal cations important for development, tissue homeostasis and immunity (PubMed:12504855, PubMed:22898811, PubMed:23403290, PubMed:26637978, PubMed:29337306, PubMed:29453449). Transports an electroneutral complex composed of a divalent metal cation and two bicarbonate anions or alternatively a bicarbonate and a selenite anion (PubMed:27166256, PubMed:31699897). Thereby, it also contributes to the cellular uptake of selenium, an essential trace metal and micronutrient (PubMed:27166256). Also imports cadmium a non-essential metal which is cytotoxic and carcinogenic (PubMed:27466201). May also transport iron and cobalt through membranes (PubMed:22898811). Through zinc import, indirectly regulates the metal-dependent transcription factor MTF1 and the expression of some metalloproteases involved in cartilage catabolism and also probably heart development (PubMed:29337306). Also indirectly regulates the expression of proteins involved in cell morphology and cytoskeleton organization (PubMed:29927450). Indirectly controls innate immune function and inflammatory response by regulating zinc cellular uptake which in turn modulates the expression of genes specific of these processes (PubMed:23403290, PubMed:28056086). Protects, for instance, cells from injury and death at the onset of inflammation (PubMed:18390834). By regulating zinc influx into monocytes also directly modulates their adhesion to endothelial cells and arteries (By similarity). Reclaims manganese from the bile at the apical membrane of hepatocytes, thereby regulating the activity of the manganese-dependent enzymes through the systemic levels of the nutrient (PubMed:28481222). Also participates in manganese reabsorption in the proximal tubule of the kidney (PubMed:26637978). By mediating the extracellular uptake of manganese by cells of the blood-brain barrier, may also play a role in the transport of the micronutrient to the brain (PubMed:26637978, PubMed:31699897). With manganese cellular uptake also participates in mitochondrial proper function (PubMed:29453449). Finally, also probably functions intracellularly, translocating zinc from lysosome to cytosol to indirectly enhance the expression of specific genes during TCR-mediated T cell activation (PubMed:19401385).</text>
</comment>
<comment type="catalytic activity">
    <reaction evidence="24 27">
        <text>Zn(2+)(out) + 2 hydrogencarbonate(out) = Zn(2+)(in) + 2 hydrogencarbonate(in)</text>
        <dbReference type="Rhea" id="RHEA:62252"/>
        <dbReference type="ChEBI" id="CHEBI:17544"/>
        <dbReference type="ChEBI" id="CHEBI:29105"/>
    </reaction>
</comment>
<comment type="catalytic activity">
    <reaction evidence="2">
        <text>selenite(out) + Zn(2+)(out) + hydrogencarbonate(out) = selenite(in) + Zn(2+)(in) + hydrogencarbonate(in)</text>
        <dbReference type="Rhea" id="RHEA:62264"/>
        <dbReference type="ChEBI" id="CHEBI:17544"/>
        <dbReference type="ChEBI" id="CHEBI:18212"/>
        <dbReference type="ChEBI" id="CHEBI:29105"/>
    </reaction>
</comment>
<comment type="catalytic activity">
    <reaction evidence="28">
        <text>Mn(2+)(out) + 2 hydrogencarbonate(out) = Mn(2+)(in) + 2 hydrogencarbonate(in)</text>
        <dbReference type="Rhea" id="RHEA:62260"/>
        <dbReference type="ChEBI" id="CHEBI:17544"/>
        <dbReference type="ChEBI" id="CHEBI:29035"/>
    </reaction>
</comment>
<comment type="catalytic activity">
    <reaction evidence="25">
        <text>Fe(2+)(out) + 2 hydrogencarbonate(out) = Fe(2+)(in) + 2 hydrogencarbonate(in)</text>
        <dbReference type="Rhea" id="RHEA:62368"/>
        <dbReference type="ChEBI" id="CHEBI:17544"/>
        <dbReference type="ChEBI" id="CHEBI:29033"/>
    </reaction>
</comment>
<comment type="catalytic activity">
    <reaction evidence="26">
        <text>Cd(2+)(out) + 2 hydrogencarbonate(out) = Cd(2+)(in) + 2 hydrogencarbonate(in)</text>
        <dbReference type="Rhea" id="RHEA:62256"/>
        <dbReference type="ChEBI" id="CHEBI:17544"/>
        <dbReference type="ChEBI" id="CHEBI:48775"/>
    </reaction>
</comment>
<comment type="catalytic activity">
    <reaction evidence="1">
        <text>Co(2+)(out) + 2 hydrogencarbonate(out) = Co(2+)(in) + 2 hydrogencarbonate(in)</text>
        <dbReference type="Rhea" id="RHEA:73491"/>
        <dbReference type="ChEBI" id="CHEBI:17544"/>
        <dbReference type="ChEBI" id="CHEBI:48828"/>
    </reaction>
</comment>
<comment type="biophysicochemical properties">
    <kinetics>
        <KM evidence="17">1.44 uM for Mn(2+)</KM>
    </kinetics>
</comment>
<comment type="subunit">
    <text evidence="1">Homodimer.</text>
</comment>
<comment type="subcellular location">
    <subcellularLocation>
        <location evidence="4 5 16 19">Cell membrane</location>
        <topology evidence="3">Multi-pass membrane protein</topology>
    </subcellularLocation>
    <subcellularLocation>
        <location evidence="4 5 6">Lysosome membrane</location>
        <topology evidence="3">Multi-pass membrane protein</topology>
    </subcellularLocation>
    <subcellularLocation>
        <location evidence="19">Apical cell membrane</location>
        <topology evidence="3">Multi-pass membrane protein</topology>
    </subcellularLocation>
    <subcellularLocation>
        <location evidence="19">Basolateral cell membrane</location>
        <topology evidence="3">Multi-pass membrane protein</topology>
    </subcellularLocation>
    <text evidence="6 19">Localizes to the lysosome of activated T-cells (PubMed:19401385). A large fraction of the protein is found intracellularly in microvascular capillary endothelial cells that constitute the blood-brain barrier (PubMed:31699897). Localized and functional at both apical and basolateral membranes of microvascular capillary endothelial cells that constitute the blood-brain barrier (PubMed:31699897).</text>
</comment>
<comment type="alternative products">
    <event type="alternative splicing"/>
    <isoform>
        <id>Q9C0K1-1</id>
        <name>1</name>
        <sequence type="displayed"/>
    </isoform>
    <isoform>
        <id>Q9C0K1-2</id>
        <name>2</name>
        <sequence type="described" ref="VSP_029884 VSP_029885"/>
    </isoform>
    <isoform>
        <id>Q9C0K1-3</id>
        <name>3</name>
        <sequence type="described" ref="VSP_043675"/>
    </isoform>
</comment>
<comment type="tissue specificity">
    <text evidence="4 7 14 19">Ubiquitously expressed (PubMed:12504855, PubMed:22898811, PubMed:28056086, PubMed:31699897). Expressed in thymus, placenta, lung, liver, pancreas, salivary gland and, to a lower extent, in spleen, testis, ovary, small intestine, colon, leukocyte, heart. Highest expression is observed in pancreas (PubMed:12504855). Expressed by macrophages (at protein level) (PubMed:28056086). Expressed by microvascular capillary endothelial cells that constitute the blood-brain barrier (at protein level) (PubMed:31699897).</text>
</comment>
<comment type="induction">
    <text evidence="4 5 6 8 14 17">Up-regulated by manganese (PubMed:29453449). Up-regulated by lipopolysaccharides (at protein level) (PubMed:23403290, PubMed:28056086). Up-regulated by inflammatory cytokines like TNF (PubMed:12504855, PubMed:18390834). Down-regulated following phorbol ester treatment (PubMed:12504855). Up-regulated by zinc and T-cell activation (PubMed:19401385).</text>
</comment>
<comment type="induction">
    <text evidence="4">(Microbial infection) Up-regulated by live and heat-killed Mycobacterium bovis bacterial cell wall.</text>
</comment>
<comment type="PTM">
    <text evidence="1 5">N-glycosylated (PubMed:18390834). N-glycosylation is not required for proper iron and zinc transport (By similarity).</text>
</comment>
<comment type="disease" evidence="9 10 17">
    <disease id="DI-04605">
        <name>Congenital disorder of glycosylation 2N</name>
        <acronym>CDG2N</acronym>
        <description>A form of congenital disorder of glycosylation, a genetically heterogeneous group of autosomal recessive, multisystem disorders caused by a defect in glycoprotein biosynthesis and characterized by under-glycosylated serum glycoproteins. Congenital disorders of glycosylation result in a wide variety of clinical features, such as defects in the nervous system development, psychomotor retardation, dysmorphic features, hypotonia, coagulation disorders, and immunodeficiency. The broad spectrum of features reflects the critical role of N-glycoproteins during embryonic development, differentiation, and maintenance of cell functions.</description>
        <dbReference type="MIM" id="616721"/>
    </disease>
    <text>The disease is caused by variants affecting the gene represented in this entry.</text>
</comment>
<comment type="disease">
    <text evidence="13">Rare variants in SLC39A8 may be a cause of Leigh-like mitochondrial syndrome characterized by profound developmental delay, dystonia, seizures and failure to thrive.</text>
</comment>
<comment type="similarity">
    <text evidence="23">Belongs to the ZIP transporter (TC 2.A.5) family.</text>
</comment>
<name>S39A8_HUMAN</name>
<proteinExistence type="evidence at protein level"/>